<accession>B3PR16</accession>
<evidence type="ECO:0000255" key="1">
    <source>
        <dbReference type="HAMAP-Rule" id="MF_00385"/>
    </source>
</evidence>
<evidence type="ECO:0000256" key="2">
    <source>
        <dbReference type="SAM" id="MobiDB-lite"/>
    </source>
</evidence>
<evidence type="ECO:0000305" key="3"/>
<feature type="chain" id="PRO_1000196461" description="Small ribosomal subunit protein bS16">
    <location>
        <begin position="1"/>
        <end position="123"/>
    </location>
</feature>
<feature type="region of interest" description="Disordered" evidence="2">
    <location>
        <begin position="87"/>
        <end position="123"/>
    </location>
</feature>
<feature type="compositionally biased region" description="Basic and acidic residues" evidence="2">
    <location>
        <begin position="99"/>
        <end position="110"/>
    </location>
</feature>
<feature type="compositionally biased region" description="Low complexity" evidence="2">
    <location>
        <begin position="111"/>
        <end position="123"/>
    </location>
</feature>
<keyword id="KW-0687">Ribonucleoprotein</keyword>
<keyword id="KW-0689">Ribosomal protein</keyword>
<sequence>MALKIRLARGGSKKRPYYHVVLADARSPRDGRFLENLGSWNPMLAKDDEKRVQLNAERIKHWLDNGAQPTDRVLRFLNEAGVAKREAKNNPIKAKPGKRAQERAAEKAQKAADAAAAAADAAE</sequence>
<comment type="similarity">
    <text evidence="1">Belongs to the bacterial ribosomal protein bS16 family.</text>
</comment>
<proteinExistence type="inferred from homology"/>
<reference key="1">
    <citation type="journal article" date="2010" name="Appl. Environ. Microbiol.">
        <title>Conserved symbiotic plasmid DNA sequences in the multireplicon pangenomic structure of Rhizobium etli.</title>
        <authorList>
            <person name="Gonzalez V."/>
            <person name="Acosta J.L."/>
            <person name="Santamaria R.I."/>
            <person name="Bustos P."/>
            <person name="Fernandez J.L."/>
            <person name="Hernandez Gonzalez I.L."/>
            <person name="Diaz R."/>
            <person name="Flores M."/>
            <person name="Palacios R."/>
            <person name="Mora J."/>
            <person name="Davila G."/>
        </authorList>
    </citation>
    <scope>NUCLEOTIDE SEQUENCE [LARGE SCALE GENOMIC DNA]</scope>
    <source>
        <strain>CIAT 652</strain>
    </source>
</reference>
<dbReference type="EMBL" id="CP001074">
    <property type="protein sequence ID" value="ACE93170.1"/>
    <property type="molecule type" value="Genomic_DNA"/>
</dbReference>
<dbReference type="SMR" id="B3PR16"/>
<dbReference type="KEGG" id="rec:RHECIAT_CH0004241"/>
<dbReference type="eggNOG" id="COG0228">
    <property type="taxonomic scope" value="Bacteria"/>
</dbReference>
<dbReference type="HOGENOM" id="CLU_100590_3_1_5"/>
<dbReference type="Proteomes" id="UP000008817">
    <property type="component" value="Chromosome"/>
</dbReference>
<dbReference type="GO" id="GO:0005737">
    <property type="term" value="C:cytoplasm"/>
    <property type="evidence" value="ECO:0007669"/>
    <property type="project" value="UniProtKB-ARBA"/>
</dbReference>
<dbReference type="GO" id="GO:0015935">
    <property type="term" value="C:small ribosomal subunit"/>
    <property type="evidence" value="ECO:0007669"/>
    <property type="project" value="TreeGrafter"/>
</dbReference>
<dbReference type="GO" id="GO:0003735">
    <property type="term" value="F:structural constituent of ribosome"/>
    <property type="evidence" value="ECO:0007669"/>
    <property type="project" value="InterPro"/>
</dbReference>
<dbReference type="GO" id="GO:0006412">
    <property type="term" value="P:translation"/>
    <property type="evidence" value="ECO:0007669"/>
    <property type="project" value="UniProtKB-UniRule"/>
</dbReference>
<dbReference type="Gene3D" id="3.30.1320.10">
    <property type="match status" value="1"/>
</dbReference>
<dbReference type="HAMAP" id="MF_00385">
    <property type="entry name" value="Ribosomal_bS16"/>
    <property type="match status" value="1"/>
</dbReference>
<dbReference type="InterPro" id="IPR000307">
    <property type="entry name" value="Ribosomal_bS16"/>
</dbReference>
<dbReference type="InterPro" id="IPR023803">
    <property type="entry name" value="Ribosomal_bS16_dom_sf"/>
</dbReference>
<dbReference type="NCBIfam" id="TIGR00002">
    <property type="entry name" value="S16"/>
    <property type="match status" value="1"/>
</dbReference>
<dbReference type="PANTHER" id="PTHR12919">
    <property type="entry name" value="30S RIBOSOMAL PROTEIN S16"/>
    <property type="match status" value="1"/>
</dbReference>
<dbReference type="PANTHER" id="PTHR12919:SF20">
    <property type="entry name" value="SMALL RIBOSOMAL SUBUNIT PROTEIN BS16M"/>
    <property type="match status" value="1"/>
</dbReference>
<dbReference type="Pfam" id="PF00886">
    <property type="entry name" value="Ribosomal_S16"/>
    <property type="match status" value="1"/>
</dbReference>
<dbReference type="SUPFAM" id="SSF54565">
    <property type="entry name" value="Ribosomal protein S16"/>
    <property type="match status" value="1"/>
</dbReference>
<organism>
    <name type="scientific">Rhizobium etli (strain CIAT 652)</name>
    <dbReference type="NCBI Taxonomy" id="491916"/>
    <lineage>
        <taxon>Bacteria</taxon>
        <taxon>Pseudomonadati</taxon>
        <taxon>Pseudomonadota</taxon>
        <taxon>Alphaproteobacteria</taxon>
        <taxon>Hyphomicrobiales</taxon>
        <taxon>Rhizobiaceae</taxon>
        <taxon>Rhizobium/Agrobacterium group</taxon>
        <taxon>Rhizobium</taxon>
    </lineage>
</organism>
<protein>
    <recommendedName>
        <fullName evidence="1">Small ribosomal subunit protein bS16</fullName>
    </recommendedName>
    <alternativeName>
        <fullName evidence="3">30S ribosomal protein S16</fullName>
    </alternativeName>
</protein>
<name>RS16_RHIE6</name>
<gene>
    <name evidence="1" type="primary">rpsP</name>
    <name type="ordered locus">RHECIAT_CH0004241</name>
</gene>